<comment type="function">
    <text evidence="7 10">Netrins control guidance of CNS commissural axons and peripheral motor axons. Its association with either DCC or some UNC5 receptors will lead to axon attraction or repulsion, respectively. Binding to UNC5C might cause dissociation of UNC5C from polymerized TUBB3 in microtubules and thereby lead to increased microtubule dynamics and axon repulsion (PubMed:28483977). Involved in dorsal root ganglion axon projection towards the spinal cord (PubMed:28483977). It also serves as a survival factor via its association with its receptors which prevent the initiation of apoptosis. Involved in tumorigenesis by regulating apoptosis (PubMed:15343335).</text>
</comment>
<comment type="subunit">
    <text evidence="2 8 12 13 14">Binds to its receptors; DCC, UNC5A, UNC5B, UNC5C and probably UNC5D (PubMed:9950216). Binds to its receptor; DSCAM (PubMed:19196994). Interacts with DCC (PubMed:38314870). Interacts with APP (By similarity).</text>
</comment>
<comment type="interaction">
    <interactant intactId="EBI-2678626">
        <id>O95631</id>
    </interactant>
    <interactant intactId="EBI-20829246">
        <id>PRO_0000000089</id>
        <label>APP</label>
        <dbReference type="UniProtKB" id="P05067"/>
    </interactant>
    <organismsDiffer>false</organismsDiffer>
    <experiments>3</experiments>
</comment>
<comment type="interaction">
    <interactant intactId="EBI-2678626">
        <id>O95631</id>
    </interactant>
    <interactant intactId="EBI-821758">
        <id>PRO_0000000092</id>
        <label>APP</label>
        <dbReference type="UniProtKB" id="P05067"/>
    </interactant>
    <organismsDiffer>false</organismsDiffer>
    <experiments>6</experiments>
</comment>
<comment type="interaction">
    <interactant intactId="EBI-2678626">
        <id>O95631</id>
    </interactant>
    <interactant intactId="EBI-1222919">
        <id>P43146</id>
        <label>DCC</label>
    </interactant>
    <organismsDiffer>false</organismsDiffer>
    <experiments>4</experiments>
</comment>
<comment type="interaction">
    <interactant intactId="EBI-2678626">
        <id>O95631</id>
    </interactant>
    <interactant intactId="EBI-10827752">
        <id>Q8NBI3</id>
        <label>DRAXIN</label>
    </interactant>
    <organismsDiffer>false</organismsDiffer>
    <experiments>3</experiments>
</comment>
<comment type="interaction">
    <interactant intactId="EBI-2678626">
        <id>O95631</id>
    </interactant>
    <interactant intactId="EBI-10832046">
        <id>Q8IZJ1-2</id>
        <label>UNC5B</label>
    </interactant>
    <organismsDiffer>false</organismsDiffer>
    <experiments>2</experiments>
</comment>
<comment type="subcellular location">
    <subcellularLocation>
        <location evidence="11">Secreted</location>
    </subcellularLocation>
    <subcellularLocation>
        <location evidence="11">Cytoplasm</location>
    </subcellularLocation>
    <text evidence="11">Mainly secreted.</text>
</comment>
<comment type="tissue specificity">
    <text evidence="9 13">Widely expressed in normal adult tissues with highest levels in heart, small intestine, colon, liver and prostate. Reduced expression in brain tumors and neuroblastomas. Expressed in epididymis (at protein level).</text>
</comment>
<comment type="disease" evidence="11 12">
    <disease id="DI-05444">
        <name>Mirror movements 4</name>
        <acronym>MRMV4</acronym>
        <description>A disorder characterized by contralateral involuntary movements that mirror voluntary ones. While mirror movements are occasionally found in young children, persistence beyond the age of 10 is abnormal. Mirror movements occur more commonly in the upper extremities. MRMV4 inheritance is autosomal dominant.</description>
        <dbReference type="MIM" id="618264"/>
    </disease>
    <text>The disease is caused by variants affecting the gene represented in this entry.</text>
</comment>
<sequence>MMRAVWEALAALAAVACLVGAVRGGPGLSMFAGQAAQPDPCSDENGHPRRCIPDFVNAAFGKDVRVSSTCGRPPARYCVVSERGEERLRSCHLCNASDPKKAHPPAFLTDLNNPHNLTCWQSENYLQFPHNVTLTLSLGKKFEVTYVSLQFCSPRPESMAIYKSMDYGRTWVPFQFYSTQCRKMYNRPHRAPITKQNEQEAVCTDSHTDMRPLSGGLIAFSTLDGRPSAHDFDNSPVLQDWVTATDIRVAFSRLHTFGDENEDDSELARDSYFYAVSDLQVGGRCKCNGHAARCVRDRDDSLVCDCRHNTAGPECDRCKPFHYDRPWQRATAREANECVACNCNLHARRCRFNMELYKLSGRKSGGVCLNCRHNTAGRHCHYCKEGYYRDMGKPITHRKACKACDCHPVGAAGKTCNQTTGQCPCKDGVTGITCNRCAKGYQQSRSPIAPCIKIPVAPPTTAASSVEEPEDCDSYCKASKGKLKINMKKYCKKDYAVQIHILKADKAGDWWKFTVNIISVYKQGTSRIRRGDQSLWIRSRDIACKCPKIKPLKKYLLLGNAEDSPDQSGIVADKSSLVIQWRDTWARRLRKFQQREKKGKCKKA</sequence>
<evidence type="ECO:0000250" key="1"/>
<evidence type="ECO:0000250" key="2">
    <source>
        <dbReference type="UniProtKB" id="O09118"/>
    </source>
</evidence>
<evidence type="ECO:0000255" key="3"/>
<evidence type="ECO:0000255" key="4">
    <source>
        <dbReference type="PROSITE-ProRule" id="PRU00295"/>
    </source>
</evidence>
<evidence type="ECO:0000255" key="5">
    <source>
        <dbReference type="PROSITE-ProRule" id="PRU00460"/>
    </source>
</evidence>
<evidence type="ECO:0000255" key="6">
    <source>
        <dbReference type="PROSITE-ProRule" id="PRU00466"/>
    </source>
</evidence>
<evidence type="ECO:0000269" key="7">
    <source>
    </source>
</evidence>
<evidence type="ECO:0000269" key="8">
    <source>
    </source>
</evidence>
<evidence type="ECO:0000269" key="9">
    <source>
    </source>
</evidence>
<evidence type="ECO:0000269" key="10">
    <source>
    </source>
</evidence>
<evidence type="ECO:0000269" key="11">
    <source>
    </source>
</evidence>
<evidence type="ECO:0000269" key="12">
    <source>
    </source>
</evidence>
<evidence type="ECO:0000269" key="13">
    <source>
    </source>
</evidence>
<evidence type="ECO:0000303" key="14">
    <source>
    </source>
</evidence>
<evidence type="ECO:0000305" key="15"/>
<evidence type="ECO:0007829" key="16">
    <source>
        <dbReference type="PDB" id="4URT"/>
    </source>
</evidence>
<evidence type="ECO:0007829" key="17">
    <source>
        <dbReference type="PDB" id="6FKQ"/>
    </source>
</evidence>
<evidence type="ECO:0007829" key="18">
    <source>
        <dbReference type="PDB" id="7NE0"/>
    </source>
</evidence>
<evidence type="ECO:0007829" key="19">
    <source>
        <dbReference type="PDB" id="7NE1"/>
    </source>
</evidence>
<reference key="1">
    <citation type="journal article" date="1999" name="Cell Growth Differ.">
        <title>Netrin-1: interaction with deleted in colorectal cancer (DCC) and alterations in brain tumors and neuroblastomas.</title>
        <authorList>
            <person name="Meyerhardt J.A."/>
            <person name="Caca K."/>
            <person name="Eckstrand B.C."/>
            <person name="Hu G."/>
            <person name="Lengauer C."/>
            <person name="Banavali S."/>
            <person name="Look A.T."/>
            <person name="Fearon E.R."/>
        </authorList>
    </citation>
    <scope>NUCLEOTIDE SEQUENCE [MRNA]</scope>
    <scope>INTERACTION WITH DCC</scope>
    <scope>TISSUE SPECIFICITY</scope>
    <scope>VARIANTS HIS-351 AND GLU-489</scope>
    <source>
        <tissue>Brain stem</tissue>
        <tissue>Liver</tissue>
    </source>
</reference>
<reference key="2">
    <citation type="journal article" date="2006" name="Nature">
        <title>DNA sequence of human chromosome 17 and analysis of rearrangement in the human lineage.</title>
        <authorList>
            <person name="Zody M.C."/>
            <person name="Garber M."/>
            <person name="Adams D.J."/>
            <person name="Sharpe T."/>
            <person name="Harrow J."/>
            <person name="Lupski J.R."/>
            <person name="Nicholson C."/>
            <person name="Searle S.M."/>
            <person name="Wilming L."/>
            <person name="Young S.K."/>
            <person name="Abouelleil A."/>
            <person name="Allen N.R."/>
            <person name="Bi W."/>
            <person name="Bloom T."/>
            <person name="Borowsky M.L."/>
            <person name="Bugalter B.E."/>
            <person name="Butler J."/>
            <person name="Chang J.L."/>
            <person name="Chen C.-K."/>
            <person name="Cook A."/>
            <person name="Corum B."/>
            <person name="Cuomo C.A."/>
            <person name="de Jong P.J."/>
            <person name="DeCaprio D."/>
            <person name="Dewar K."/>
            <person name="FitzGerald M."/>
            <person name="Gilbert J."/>
            <person name="Gibson R."/>
            <person name="Gnerre S."/>
            <person name="Goldstein S."/>
            <person name="Grafham D.V."/>
            <person name="Grocock R."/>
            <person name="Hafez N."/>
            <person name="Hagopian D.S."/>
            <person name="Hart E."/>
            <person name="Norman C.H."/>
            <person name="Humphray S."/>
            <person name="Jaffe D.B."/>
            <person name="Jones M."/>
            <person name="Kamal M."/>
            <person name="Khodiyar V.K."/>
            <person name="LaButti K."/>
            <person name="Laird G."/>
            <person name="Lehoczky J."/>
            <person name="Liu X."/>
            <person name="Lokyitsang T."/>
            <person name="Loveland J."/>
            <person name="Lui A."/>
            <person name="Macdonald P."/>
            <person name="Major J.E."/>
            <person name="Matthews L."/>
            <person name="Mauceli E."/>
            <person name="McCarroll S.A."/>
            <person name="Mihalev A.H."/>
            <person name="Mudge J."/>
            <person name="Nguyen C."/>
            <person name="Nicol R."/>
            <person name="O'Leary S.B."/>
            <person name="Osoegawa K."/>
            <person name="Schwartz D.C."/>
            <person name="Shaw-Smith C."/>
            <person name="Stankiewicz P."/>
            <person name="Steward C."/>
            <person name="Swarbreck D."/>
            <person name="Venkataraman V."/>
            <person name="Whittaker C.A."/>
            <person name="Yang X."/>
            <person name="Zimmer A.R."/>
            <person name="Bradley A."/>
            <person name="Hubbard T."/>
            <person name="Birren B.W."/>
            <person name="Rogers J."/>
            <person name="Lander E.S."/>
            <person name="Nusbaum C."/>
        </authorList>
    </citation>
    <scope>NUCLEOTIDE SEQUENCE [LARGE SCALE GENOMIC DNA]</scope>
</reference>
<reference key="3">
    <citation type="journal article" date="2010" name="Mol. Cell. Proteomics">
        <title>Systematic mapping and functional analysis of a family of human epididymal secretory sperm-located proteins.</title>
        <authorList>
            <person name="Li J."/>
            <person name="Liu F."/>
            <person name="Wang H."/>
            <person name="Liu X."/>
            <person name="Liu J."/>
            <person name="Li N."/>
            <person name="Wan F."/>
            <person name="Wang W."/>
            <person name="Zhang C."/>
            <person name="Jin S."/>
            <person name="Liu J."/>
            <person name="Zhu P."/>
            <person name="Liu Y."/>
        </authorList>
    </citation>
    <scope>NUCLEOTIDE SEQUENCE [MRNA]</scope>
    <scope>TISSUE SPECIFICITY</scope>
    <source>
        <tissue>Epididymis</tissue>
    </source>
</reference>
<reference key="4">
    <citation type="journal article" date="2004" name="Nature">
        <title>Netrin-1 controls colorectal tumorigenesis by regulating apoptosis.</title>
        <authorList>
            <person name="Mazelin L."/>
            <person name="Bernet A."/>
            <person name="Bonod-Bidaud C."/>
            <person name="Pays L."/>
            <person name="Arnaud S."/>
            <person name="Gespach C."/>
            <person name="Bredesen D.E."/>
            <person name="Scoazec J.-Y."/>
            <person name="Mehlen P."/>
        </authorList>
    </citation>
    <scope>FUNCTION</scope>
</reference>
<reference key="5">
    <citation type="journal article" date="2009" name="Proc. Natl. Acad. Sci. U.S.A.">
        <title>DSCAM functions as a netrin receptor in commissural axon pathfinding.</title>
        <authorList>
            <person name="Liu G."/>
            <person name="Li W."/>
            <person name="Wang L."/>
            <person name="Kar A."/>
            <person name="Guan K.L."/>
            <person name="Rao Y."/>
            <person name="Wu J.Y."/>
        </authorList>
    </citation>
    <scope>INTERACTION WITH DSCAM</scope>
</reference>
<reference key="6">
    <citation type="journal article" date="2017" name="J. Clin. Invest.">
        <title>Mutations in the netrin-1 gene cause congenital mirror movements.</title>
        <authorList>
            <person name="Meneret A."/>
            <person name="Franz E.A."/>
            <person name="Trouillard O."/>
            <person name="Oliver T.C."/>
            <person name="Zagar Y."/>
            <person name="Robertson S.P."/>
            <person name="Welniarz Q."/>
            <person name="Gardner R.J.M."/>
            <person name="Gallea C."/>
            <person name="Srour M."/>
            <person name="Depienne C."/>
            <person name="Jasoni C.L."/>
            <person name="Dubacq C."/>
            <person name="Riant F."/>
            <person name="Lamy J.C."/>
            <person name="Morel M.P."/>
            <person name="Guerois R."/>
            <person name="Andreani J."/>
            <person name="Fouquet C."/>
            <person name="Doulazmi M."/>
            <person name="Vidailhet M."/>
            <person name="Rouleau G.A."/>
            <person name="Brice A."/>
            <person name="Chedotal A."/>
            <person name="Dusart I."/>
            <person name="Roze E."/>
            <person name="Markie D."/>
        </authorList>
    </citation>
    <scope>SUBCELLULAR LOCATION</scope>
    <scope>INVOLVEMENT IN MRMV4</scope>
    <scope>VARIANTS MRMV4 ILE-518 DEL; ARG-601 AND SER-601</scope>
    <scope>CHARACTERIZATION OF VARIANTS MRMV4 ILE-518 DEL; ARG-601 AND SER-601</scope>
</reference>
<reference key="7">
    <citation type="journal article" date="2017" name="J. Neurosci.">
        <title>Uncoupling of UNC5C with Polymerized TUBB3 in Microtubules Mediates Netrin-1 Repulsion.</title>
        <authorList>
            <person name="Shao Q."/>
            <person name="Yang T."/>
            <person name="Huang H."/>
            <person name="Alarmanazi F."/>
            <person name="Liu G."/>
        </authorList>
    </citation>
    <scope>FUNCTION</scope>
</reference>
<reference key="8">
    <citation type="journal article" date="2024" name="Mov. Disord.">
        <title>Defining the genetic landscape of congenital mirror movements in 80 affected individuals.</title>
        <authorList>
            <person name="Collins Hutchinson M.L."/>
            <person name="St-Onge J."/>
            <person name="Schlienger S."/>
            <person name="Boudrahem-Addour N."/>
            <person name="Mougharbel L."/>
            <person name="Michaud J.F."/>
            <person name="Lloyd C."/>
            <person name="Bruneau E."/>
            <person name="Roux C."/>
            <person name="Sahly A.N."/>
            <person name="Osterman B."/>
            <person name="Myers K.A."/>
            <person name="Rouleau G.A."/>
            <person name="Jimenez Cruz D.A."/>
            <person name="Riviere J.B."/>
            <person name="Accogli A."/>
            <person name="Charron F."/>
            <person name="Srour M."/>
        </authorList>
    </citation>
    <scope>VARIANT MRMV4 SER-601</scope>
    <scope>INVOLVEMENT IN MRMV4</scope>
    <scope>INTERACTION WITH DCC</scope>
</reference>
<proteinExistence type="evidence at protein level"/>
<protein>
    <recommendedName>
        <fullName>Netrin-1</fullName>
    </recommendedName>
    <alternativeName>
        <fullName>Epididymis tissue protein Li 131P</fullName>
    </alternativeName>
</protein>
<dbReference type="EMBL" id="U75586">
    <property type="protein sequence ID" value="AAD09221.1"/>
    <property type="molecule type" value="mRNA"/>
</dbReference>
<dbReference type="EMBL" id="GU727649">
    <property type="protein sequence ID" value="ADU87650.1"/>
    <property type="molecule type" value="mRNA"/>
</dbReference>
<dbReference type="EMBL" id="AC090610">
    <property type="status" value="NOT_ANNOTATED_CDS"/>
    <property type="molecule type" value="Genomic_DNA"/>
</dbReference>
<dbReference type="EMBL" id="AC005695">
    <property type="status" value="NOT_ANNOTATED_CDS"/>
    <property type="molecule type" value="Genomic_DNA"/>
</dbReference>
<dbReference type="CCDS" id="CCDS11148.1"/>
<dbReference type="RefSeq" id="NP_004813.2">
    <property type="nucleotide sequence ID" value="NM_004822.3"/>
</dbReference>
<dbReference type="RefSeq" id="XP_006721658.1">
    <property type="nucleotide sequence ID" value="XM_006721595.4"/>
</dbReference>
<dbReference type="RefSeq" id="XP_047293052.1">
    <property type="nucleotide sequence ID" value="XM_047437096.1"/>
</dbReference>
<dbReference type="RefSeq" id="XP_054173809.1">
    <property type="nucleotide sequence ID" value="XM_054317834.1"/>
</dbReference>
<dbReference type="RefSeq" id="XP_054173810.1">
    <property type="nucleotide sequence ID" value="XM_054317835.1"/>
</dbReference>
<dbReference type="PDB" id="4URT">
    <property type="method" value="X-ray"/>
    <property type="resolution" value="3.10 A"/>
    <property type="chains" value="A=39-453"/>
</dbReference>
<dbReference type="PDB" id="6FKQ">
    <property type="method" value="X-ray"/>
    <property type="resolution" value="3.07 A"/>
    <property type="chains" value="A=39-453"/>
</dbReference>
<dbReference type="PDB" id="7NDG">
    <property type="method" value="EM"/>
    <property type="resolution" value="5.98 A"/>
    <property type="chains" value="A/D/G=25-453"/>
</dbReference>
<dbReference type="PDB" id="7NE0">
    <property type="method" value="X-ray"/>
    <property type="resolution" value="3.25 A"/>
    <property type="chains" value="A=24-453"/>
</dbReference>
<dbReference type="PDB" id="7NE1">
    <property type="method" value="X-ray"/>
    <property type="resolution" value="3.15 A"/>
    <property type="chains" value="A=24-453"/>
</dbReference>
<dbReference type="PDBsum" id="4URT"/>
<dbReference type="PDBsum" id="6FKQ"/>
<dbReference type="PDBsum" id="7NDG"/>
<dbReference type="PDBsum" id="7NE0"/>
<dbReference type="PDBsum" id="7NE1"/>
<dbReference type="EMDB" id="EMD-12286"/>
<dbReference type="SASBDB" id="O95631"/>
<dbReference type="SMR" id="O95631"/>
<dbReference type="BioGRID" id="114816">
    <property type="interactions" value="17"/>
</dbReference>
<dbReference type="DIP" id="DIP-46273N"/>
<dbReference type="FunCoup" id="O95631">
    <property type="interactions" value="341"/>
</dbReference>
<dbReference type="IntAct" id="O95631">
    <property type="interactions" value="21"/>
</dbReference>
<dbReference type="STRING" id="9606.ENSP00000173229"/>
<dbReference type="ChEMBL" id="CHEMBL1741307"/>
<dbReference type="GlyConnect" id="1542">
    <property type="glycosylation" value="1 N-Linked glycan (1 site)"/>
</dbReference>
<dbReference type="GlyCosmos" id="O95631">
    <property type="glycosylation" value="4 sites, 1 glycan"/>
</dbReference>
<dbReference type="GlyGen" id="O95631">
    <property type="glycosylation" value="7 sites, 3 N-linked glycans (2 sites), 1 O-linked glycan (3 sites)"/>
</dbReference>
<dbReference type="iPTMnet" id="O95631"/>
<dbReference type="PhosphoSitePlus" id="O95631"/>
<dbReference type="BioMuta" id="NTN1"/>
<dbReference type="jPOST" id="O95631"/>
<dbReference type="MassIVE" id="O95631"/>
<dbReference type="PaxDb" id="9606-ENSP00000173229"/>
<dbReference type="PeptideAtlas" id="O95631"/>
<dbReference type="ProteomicsDB" id="50967"/>
<dbReference type="Pumba" id="O95631"/>
<dbReference type="Antibodypedia" id="24762">
    <property type="antibodies" value="369 antibodies from 40 providers"/>
</dbReference>
<dbReference type="DNASU" id="9423"/>
<dbReference type="Ensembl" id="ENST00000173229.7">
    <property type="protein sequence ID" value="ENSP00000173229.2"/>
    <property type="gene ID" value="ENSG00000065320.9"/>
</dbReference>
<dbReference type="GeneID" id="9423"/>
<dbReference type="KEGG" id="hsa:9423"/>
<dbReference type="MANE-Select" id="ENST00000173229.7">
    <property type="protein sequence ID" value="ENSP00000173229.2"/>
    <property type="RefSeq nucleotide sequence ID" value="NM_004822.3"/>
    <property type="RefSeq protein sequence ID" value="NP_004813.2"/>
</dbReference>
<dbReference type="UCSC" id="uc002glw.4">
    <property type="organism name" value="human"/>
</dbReference>
<dbReference type="AGR" id="HGNC:8029"/>
<dbReference type="CTD" id="9423"/>
<dbReference type="DisGeNET" id="9423"/>
<dbReference type="GeneCards" id="NTN1"/>
<dbReference type="GeneReviews" id="NTN1"/>
<dbReference type="HGNC" id="HGNC:8029">
    <property type="gene designation" value="NTN1"/>
</dbReference>
<dbReference type="HPA" id="ENSG00000065320">
    <property type="expression patterns" value="Tissue enhanced (heart)"/>
</dbReference>
<dbReference type="MalaCards" id="NTN1"/>
<dbReference type="MIM" id="601614">
    <property type="type" value="gene"/>
</dbReference>
<dbReference type="MIM" id="618264">
    <property type="type" value="phenotype"/>
</dbReference>
<dbReference type="neXtProt" id="NX_O95631"/>
<dbReference type="OpenTargets" id="ENSG00000065320"/>
<dbReference type="Orphanet" id="238722">
    <property type="disease" value="Familial congenital mirror movements"/>
</dbReference>
<dbReference type="PharmGKB" id="PA31813"/>
<dbReference type="VEuPathDB" id="HostDB:ENSG00000065320"/>
<dbReference type="eggNOG" id="KOG3512">
    <property type="taxonomic scope" value="Eukaryota"/>
</dbReference>
<dbReference type="GeneTree" id="ENSGT00940000153882"/>
<dbReference type="HOGENOM" id="CLU_018213_2_0_1"/>
<dbReference type="InParanoid" id="O95631"/>
<dbReference type="OMA" id="FSQFSMR"/>
<dbReference type="OrthoDB" id="9972745at2759"/>
<dbReference type="PAN-GO" id="O95631">
    <property type="GO annotations" value="5 GO annotations based on evolutionary models"/>
</dbReference>
<dbReference type="PhylomeDB" id="O95631"/>
<dbReference type="TreeFam" id="TF352481"/>
<dbReference type="PathwayCommons" id="O95631"/>
<dbReference type="Reactome" id="R-HSA-373752">
    <property type="pathway name" value="Netrin-1 signaling"/>
</dbReference>
<dbReference type="Reactome" id="R-HSA-376172">
    <property type="pathway name" value="DSCAM interactions"/>
</dbReference>
<dbReference type="Reactome" id="R-HSA-418885">
    <property type="pathway name" value="DCC mediated attractive signaling"/>
</dbReference>
<dbReference type="Reactome" id="R-HSA-418886">
    <property type="pathway name" value="Netrin mediated repulsion signals"/>
</dbReference>
<dbReference type="Reactome" id="R-HSA-418890">
    <property type="pathway name" value="Role of second messengers in netrin-1 signaling"/>
</dbReference>
<dbReference type="Reactome" id="R-HSA-428542">
    <property type="pathway name" value="Regulation of commissural axon pathfinding by SLIT and ROBO"/>
</dbReference>
<dbReference type="SignaLink" id="O95631"/>
<dbReference type="SIGNOR" id="O95631"/>
<dbReference type="BioGRID-ORCS" id="9423">
    <property type="hits" value="16 hits in 1152 CRISPR screens"/>
</dbReference>
<dbReference type="ChiTaRS" id="NTN1">
    <property type="organism name" value="human"/>
</dbReference>
<dbReference type="EvolutionaryTrace" id="O95631"/>
<dbReference type="GeneWiki" id="NTN1"/>
<dbReference type="GenomeRNAi" id="9423"/>
<dbReference type="Pharos" id="O95631">
    <property type="development level" value="Tbio"/>
</dbReference>
<dbReference type="PRO" id="PR:O95631"/>
<dbReference type="Proteomes" id="UP000005640">
    <property type="component" value="Chromosome 17"/>
</dbReference>
<dbReference type="RNAct" id="O95631">
    <property type="molecule type" value="protein"/>
</dbReference>
<dbReference type="Bgee" id="ENSG00000065320">
    <property type="expression patterns" value="Expressed in mucosa of stomach and 147 other cell types or tissues"/>
</dbReference>
<dbReference type="ExpressionAtlas" id="O95631">
    <property type="expression patterns" value="baseline and differential"/>
</dbReference>
<dbReference type="GO" id="GO:0015629">
    <property type="term" value="C:actin cytoskeleton"/>
    <property type="evidence" value="ECO:0000314"/>
    <property type="project" value="HPA"/>
</dbReference>
<dbReference type="GO" id="GO:0005604">
    <property type="term" value="C:basement membrane"/>
    <property type="evidence" value="ECO:0007669"/>
    <property type="project" value="Ensembl"/>
</dbReference>
<dbReference type="GO" id="GO:0005829">
    <property type="term" value="C:cytosol"/>
    <property type="evidence" value="ECO:0000314"/>
    <property type="project" value="HPA"/>
</dbReference>
<dbReference type="GO" id="GO:0005576">
    <property type="term" value="C:extracellular region"/>
    <property type="evidence" value="ECO:0000314"/>
    <property type="project" value="UniProtKB"/>
</dbReference>
<dbReference type="GO" id="GO:0098978">
    <property type="term" value="C:glutamatergic synapse"/>
    <property type="evidence" value="ECO:0007669"/>
    <property type="project" value="Ensembl"/>
</dbReference>
<dbReference type="GO" id="GO:0005654">
    <property type="term" value="C:nucleoplasm"/>
    <property type="evidence" value="ECO:0000314"/>
    <property type="project" value="HPA"/>
</dbReference>
<dbReference type="GO" id="GO:0000981">
    <property type="term" value="F:DNA-binding transcription factor activity, RNA polymerase II-specific"/>
    <property type="evidence" value="ECO:0000318"/>
    <property type="project" value="GO_Central"/>
</dbReference>
<dbReference type="GO" id="GO:0000978">
    <property type="term" value="F:RNA polymerase II cis-regulatory region sequence-specific DNA binding"/>
    <property type="evidence" value="ECO:0000318"/>
    <property type="project" value="GO_Central"/>
</dbReference>
<dbReference type="GO" id="GO:0033564">
    <property type="term" value="P:anterior/posterior axon guidance"/>
    <property type="evidence" value="ECO:0007669"/>
    <property type="project" value="Ensembl"/>
</dbReference>
<dbReference type="GO" id="GO:0006915">
    <property type="term" value="P:apoptotic process"/>
    <property type="evidence" value="ECO:0007669"/>
    <property type="project" value="UniProtKB-KW"/>
</dbReference>
<dbReference type="GO" id="GO:0032488">
    <property type="term" value="P:Cdc42 protein signal transduction"/>
    <property type="evidence" value="ECO:0000250"/>
    <property type="project" value="UniProtKB"/>
</dbReference>
<dbReference type="GO" id="GO:0098609">
    <property type="term" value="P:cell-cell adhesion"/>
    <property type="evidence" value="ECO:0007669"/>
    <property type="project" value="Ensembl"/>
</dbReference>
<dbReference type="GO" id="GO:0061643">
    <property type="term" value="P:chemorepulsion of axon"/>
    <property type="evidence" value="ECO:0000250"/>
    <property type="project" value="UniProtKB"/>
</dbReference>
<dbReference type="GO" id="GO:0014009">
    <property type="term" value="P:glial cell proliferation"/>
    <property type="evidence" value="ECO:0007669"/>
    <property type="project" value="Ensembl"/>
</dbReference>
<dbReference type="GO" id="GO:0042472">
    <property type="term" value="P:inner ear morphogenesis"/>
    <property type="evidence" value="ECO:0007669"/>
    <property type="project" value="Ensembl"/>
</dbReference>
<dbReference type="GO" id="GO:0060603">
    <property type="term" value="P:mammary gland duct morphogenesis"/>
    <property type="evidence" value="ECO:0007669"/>
    <property type="project" value="Ensembl"/>
</dbReference>
<dbReference type="GO" id="GO:0097475">
    <property type="term" value="P:motor neuron migration"/>
    <property type="evidence" value="ECO:0007669"/>
    <property type="project" value="Ensembl"/>
</dbReference>
<dbReference type="GO" id="GO:0030517">
    <property type="term" value="P:negative regulation of axon extension"/>
    <property type="evidence" value="ECO:0007669"/>
    <property type="project" value="Ensembl"/>
</dbReference>
<dbReference type="GO" id="GO:0007097">
    <property type="term" value="P:nuclear migration"/>
    <property type="evidence" value="ECO:0007669"/>
    <property type="project" value="Ensembl"/>
</dbReference>
<dbReference type="GO" id="GO:0045773">
    <property type="term" value="P:positive regulation of axon extension"/>
    <property type="evidence" value="ECO:0000250"/>
    <property type="project" value="UniProtKB"/>
</dbReference>
<dbReference type="GO" id="GO:2000147">
    <property type="term" value="P:positive regulation of cell motility"/>
    <property type="evidence" value="ECO:0000250"/>
    <property type="project" value="UniProtKB"/>
</dbReference>
<dbReference type="GO" id="GO:0060252">
    <property type="term" value="P:positive regulation of glial cell proliferation"/>
    <property type="evidence" value="ECO:0007669"/>
    <property type="project" value="Ensembl"/>
</dbReference>
<dbReference type="GO" id="GO:0007265">
    <property type="term" value="P:Ras protein signal transduction"/>
    <property type="evidence" value="ECO:0000250"/>
    <property type="project" value="UniProtKB"/>
</dbReference>
<dbReference type="GO" id="GO:1903975">
    <property type="term" value="P:regulation of glial cell migration"/>
    <property type="evidence" value="ECO:0007669"/>
    <property type="project" value="Ensembl"/>
</dbReference>
<dbReference type="GO" id="GO:0051963">
    <property type="term" value="P:regulation of synapse assembly"/>
    <property type="evidence" value="ECO:0007669"/>
    <property type="project" value="Ensembl"/>
</dbReference>
<dbReference type="GO" id="GO:0006357">
    <property type="term" value="P:regulation of transcription by RNA polymerase II"/>
    <property type="evidence" value="ECO:0000318"/>
    <property type="project" value="GO_Central"/>
</dbReference>
<dbReference type="GO" id="GO:0006930">
    <property type="term" value="P:substrate-dependent cell migration, cell extension"/>
    <property type="evidence" value="ECO:0000250"/>
    <property type="project" value="UniProtKB"/>
</dbReference>
<dbReference type="CDD" id="cd00055">
    <property type="entry name" value="EGF_Lam"/>
    <property type="match status" value="3"/>
</dbReference>
<dbReference type="CDD" id="cd03579">
    <property type="entry name" value="NTR_netrin-1_like"/>
    <property type="match status" value="1"/>
</dbReference>
<dbReference type="FunFam" id="2.10.25.10:FF:000081">
    <property type="entry name" value="Netrin 1"/>
    <property type="match status" value="1"/>
</dbReference>
<dbReference type="FunFam" id="2.40.50.120:FF:000001">
    <property type="entry name" value="Netrin 1"/>
    <property type="match status" value="1"/>
</dbReference>
<dbReference type="FunFam" id="2.60.120.260:FF:000015">
    <property type="entry name" value="Netrin 1"/>
    <property type="match status" value="1"/>
</dbReference>
<dbReference type="FunFam" id="2.10.25.10:FF:000048">
    <property type="entry name" value="Netrin 3"/>
    <property type="match status" value="1"/>
</dbReference>
<dbReference type="Gene3D" id="2.40.50.120">
    <property type="match status" value="1"/>
</dbReference>
<dbReference type="Gene3D" id="2.60.120.260">
    <property type="entry name" value="Galactose-binding domain-like"/>
    <property type="match status" value="1"/>
</dbReference>
<dbReference type="Gene3D" id="2.10.25.10">
    <property type="entry name" value="Laminin"/>
    <property type="match status" value="2"/>
</dbReference>
<dbReference type="InterPro" id="IPR008979">
    <property type="entry name" value="Galactose-bd-like_sf"/>
</dbReference>
<dbReference type="InterPro" id="IPR050440">
    <property type="entry name" value="Laminin/Netrin_ECM"/>
</dbReference>
<dbReference type="InterPro" id="IPR008211">
    <property type="entry name" value="Laminin_N"/>
</dbReference>
<dbReference type="InterPro" id="IPR002049">
    <property type="entry name" value="LE_dom"/>
</dbReference>
<dbReference type="InterPro" id="IPR056863">
    <property type="entry name" value="LMN_ATRN_NET-like_EGF"/>
</dbReference>
<dbReference type="InterPro" id="IPR001134">
    <property type="entry name" value="Netrin_domain"/>
</dbReference>
<dbReference type="InterPro" id="IPR018933">
    <property type="entry name" value="Netrin_module_non-TIMP"/>
</dbReference>
<dbReference type="InterPro" id="IPR008993">
    <property type="entry name" value="TIMP-like_OB-fold"/>
</dbReference>
<dbReference type="PANTHER" id="PTHR10574:SF378">
    <property type="entry name" value="NETRIN-1"/>
    <property type="match status" value="1"/>
</dbReference>
<dbReference type="PANTHER" id="PTHR10574">
    <property type="entry name" value="NETRIN/LAMININ-RELATED"/>
    <property type="match status" value="1"/>
</dbReference>
<dbReference type="Pfam" id="PF00053">
    <property type="entry name" value="EGF_laminin"/>
    <property type="match status" value="2"/>
</dbReference>
<dbReference type="Pfam" id="PF24973">
    <property type="entry name" value="EGF_LMN_ATRN"/>
    <property type="match status" value="1"/>
</dbReference>
<dbReference type="Pfam" id="PF00055">
    <property type="entry name" value="Laminin_N"/>
    <property type="match status" value="1"/>
</dbReference>
<dbReference type="Pfam" id="PF01759">
    <property type="entry name" value="NTR"/>
    <property type="match status" value="1"/>
</dbReference>
<dbReference type="SMART" id="SM00643">
    <property type="entry name" value="C345C"/>
    <property type="match status" value="1"/>
</dbReference>
<dbReference type="SMART" id="SM00180">
    <property type="entry name" value="EGF_Lam"/>
    <property type="match status" value="3"/>
</dbReference>
<dbReference type="SMART" id="SM00136">
    <property type="entry name" value="LamNT"/>
    <property type="match status" value="1"/>
</dbReference>
<dbReference type="SUPFAM" id="SSF57196">
    <property type="entry name" value="EGF/Laminin"/>
    <property type="match status" value="3"/>
</dbReference>
<dbReference type="SUPFAM" id="SSF49785">
    <property type="entry name" value="Galactose-binding domain-like"/>
    <property type="match status" value="1"/>
</dbReference>
<dbReference type="SUPFAM" id="SSF50242">
    <property type="entry name" value="TIMP-like"/>
    <property type="match status" value="1"/>
</dbReference>
<dbReference type="PROSITE" id="PS00022">
    <property type="entry name" value="EGF_1"/>
    <property type="match status" value="2"/>
</dbReference>
<dbReference type="PROSITE" id="PS01248">
    <property type="entry name" value="EGF_LAM_1"/>
    <property type="match status" value="3"/>
</dbReference>
<dbReference type="PROSITE" id="PS50027">
    <property type="entry name" value="EGF_LAM_2"/>
    <property type="match status" value="3"/>
</dbReference>
<dbReference type="PROSITE" id="PS51117">
    <property type="entry name" value="LAMININ_NTER"/>
    <property type="match status" value="1"/>
</dbReference>
<dbReference type="PROSITE" id="PS50189">
    <property type="entry name" value="NTR"/>
    <property type="match status" value="1"/>
</dbReference>
<organism>
    <name type="scientific">Homo sapiens</name>
    <name type="common">Human</name>
    <dbReference type="NCBI Taxonomy" id="9606"/>
    <lineage>
        <taxon>Eukaryota</taxon>
        <taxon>Metazoa</taxon>
        <taxon>Chordata</taxon>
        <taxon>Craniata</taxon>
        <taxon>Vertebrata</taxon>
        <taxon>Euteleostomi</taxon>
        <taxon>Mammalia</taxon>
        <taxon>Eutheria</taxon>
        <taxon>Euarchontoglires</taxon>
        <taxon>Primates</taxon>
        <taxon>Haplorrhini</taxon>
        <taxon>Catarrhini</taxon>
        <taxon>Hominidae</taxon>
        <taxon>Homo</taxon>
    </lineage>
</organism>
<keyword id="KW-0002">3D-structure</keyword>
<keyword id="KW-0053">Apoptosis</keyword>
<keyword id="KW-0963">Cytoplasm</keyword>
<keyword id="KW-0225">Disease variant</keyword>
<keyword id="KW-1015">Disulfide bond</keyword>
<keyword id="KW-0325">Glycoprotein</keyword>
<keyword id="KW-0424">Laminin EGF-like domain</keyword>
<keyword id="KW-1267">Proteomics identification</keyword>
<keyword id="KW-1185">Reference proteome</keyword>
<keyword id="KW-0677">Repeat</keyword>
<keyword id="KW-0964">Secreted</keyword>
<keyword id="KW-0732">Signal</keyword>
<feature type="signal peptide" evidence="3">
    <location>
        <begin position="1"/>
        <end position="24"/>
    </location>
</feature>
<feature type="chain" id="PRO_0000017082" description="Netrin-1">
    <location>
        <begin position="25"/>
        <end position="604"/>
    </location>
</feature>
<feature type="domain" description="Laminin N-terminal" evidence="6">
    <location>
        <begin position="47"/>
        <end position="284"/>
    </location>
</feature>
<feature type="domain" description="Laminin EGF-like 1" evidence="5">
    <location>
        <begin position="285"/>
        <end position="340"/>
    </location>
</feature>
<feature type="domain" description="Laminin EGF-like 2" evidence="5">
    <location>
        <begin position="341"/>
        <end position="403"/>
    </location>
</feature>
<feature type="domain" description="Laminin EGF-like 3" evidence="5">
    <location>
        <begin position="404"/>
        <end position="453"/>
    </location>
</feature>
<feature type="domain" description="NTR" evidence="4">
    <location>
        <begin position="472"/>
        <end position="601"/>
    </location>
</feature>
<feature type="short sequence motif" description="Cell attachment site" evidence="3">
    <location>
        <begin position="530"/>
        <end position="532"/>
    </location>
</feature>
<feature type="glycosylation site" description="N-linked (GlcNAc...) asparagine" evidence="3">
    <location>
        <position position="95"/>
    </location>
</feature>
<feature type="glycosylation site" description="N-linked (GlcNAc...) asparagine" evidence="3">
    <location>
        <position position="116"/>
    </location>
</feature>
<feature type="glycosylation site" description="N-linked (GlcNAc...) asparagine" evidence="3">
    <location>
        <position position="131"/>
    </location>
</feature>
<feature type="glycosylation site" description="N-linked (GlcNAc...) asparagine" evidence="3">
    <location>
        <position position="417"/>
    </location>
</feature>
<feature type="disulfide bond" evidence="1">
    <location>
        <begin position="119"/>
        <end position="152"/>
    </location>
</feature>
<feature type="disulfide bond" evidence="1">
    <location>
        <begin position="285"/>
        <end position="294"/>
    </location>
</feature>
<feature type="disulfide bond" evidence="1">
    <location>
        <begin position="287"/>
        <end position="304"/>
    </location>
</feature>
<feature type="disulfide bond" evidence="1">
    <location>
        <begin position="306"/>
        <end position="315"/>
    </location>
</feature>
<feature type="disulfide bond" evidence="1">
    <location>
        <begin position="318"/>
        <end position="338"/>
    </location>
</feature>
<feature type="disulfide bond" evidence="1">
    <location>
        <begin position="341"/>
        <end position="350"/>
    </location>
</feature>
<feature type="disulfide bond" evidence="1">
    <location>
        <begin position="343"/>
        <end position="368"/>
    </location>
</feature>
<feature type="disulfide bond" evidence="1">
    <location>
        <begin position="371"/>
        <end position="380"/>
    </location>
</feature>
<feature type="disulfide bond" evidence="1">
    <location>
        <begin position="383"/>
        <end position="401"/>
    </location>
</feature>
<feature type="disulfide bond" evidence="1">
    <location>
        <begin position="404"/>
        <end position="416"/>
    </location>
</feature>
<feature type="disulfide bond" evidence="1">
    <location>
        <begin position="406"/>
        <end position="423"/>
    </location>
</feature>
<feature type="disulfide bond" evidence="1">
    <location>
        <begin position="425"/>
        <end position="434"/>
    </location>
</feature>
<feature type="disulfide bond" evidence="1">
    <location>
        <begin position="437"/>
        <end position="451"/>
    </location>
</feature>
<feature type="disulfide bond" evidence="1">
    <location>
        <begin position="472"/>
        <end position="544"/>
    </location>
</feature>
<feature type="disulfide bond" evidence="1">
    <location>
        <begin position="491"/>
        <end position="601"/>
    </location>
</feature>
<feature type="sequence variant" id="VAR_014279" description="In a neuroblastoma sample; dbSNP:rs531668666." evidence="13">
    <original>R</original>
    <variation>H</variation>
    <location>
        <position position="351"/>
    </location>
</feature>
<feature type="sequence variant" id="VAR_014280" description="In a neuroblastoma sample." evidence="13">
    <original>K</original>
    <variation>E</variation>
    <location>
        <position position="489"/>
    </location>
</feature>
<feature type="sequence variant" id="VAR_082026" description="In MRMV4; changed localization; exclusively detected in the cytoplasm; dbSNP:rs1567749982." evidence="11">
    <location>
        <position position="518"/>
    </location>
</feature>
<feature type="sequence variant" id="VAR_082027" description="In MRMV4; likely pathogenic; changed localization; exclusively detected in the cytoplasm; dbSNP:rs1567750186." evidence="11">
    <original>C</original>
    <variation>R</variation>
    <location>
        <position position="601"/>
    </location>
</feature>
<feature type="sequence variant" id="VAR_082028" description="In MRMV4; likely pathogenic; changed localization; exclusively detected in the cytoplasm; dbSNP:rs1567750187." evidence="11 12">
    <original>C</original>
    <variation>S</variation>
    <location>
        <position position="601"/>
    </location>
</feature>
<feature type="sequence conflict" description="In Ref. 1; AAD09221." evidence="15" ref="1">
    <original>D</original>
    <variation>T</variation>
    <location>
        <position position="299"/>
    </location>
</feature>
<feature type="strand" evidence="17">
    <location>
        <begin position="44"/>
        <end position="46"/>
    </location>
</feature>
<feature type="turn" evidence="17">
    <location>
        <begin position="58"/>
        <end position="61"/>
    </location>
</feature>
<feature type="strand" evidence="17">
    <location>
        <begin position="65"/>
        <end position="67"/>
    </location>
</feature>
<feature type="strand" evidence="17">
    <location>
        <begin position="75"/>
        <end position="83"/>
    </location>
</feature>
<feature type="strand" evidence="17">
    <location>
        <begin position="86"/>
        <end position="94"/>
    </location>
</feature>
<feature type="strand" evidence="18">
    <location>
        <begin position="96"/>
        <end position="98"/>
    </location>
</feature>
<feature type="helix" evidence="17">
    <location>
        <begin position="99"/>
        <end position="101"/>
    </location>
</feature>
<feature type="helix" evidence="17">
    <location>
        <begin position="106"/>
        <end position="109"/>
    </location>
</feature>
<feature type="strand" evidence="19">
    <location>
        <begin position="114"/>
        <end position="116"/>
    </location>
</feature>
<feature type="strand" evidence="17">
    <location>
        <begin position="132"/>
        <end position="153"/>
    </location>
</feature>
<feature type="strand" evidence="17">
    <location>
        <begin position="156"/>
        <end position="166"/>
    </location>
</feature>
<feature type="strand" evidence="17">
    <location>
        <begin position="172"/>
        <end position="179"/>
    </location>
</feature>
<feature type="helix" evidence="17">
    <location>
        <begin position="181"/>
        <end position="185"/>
    </location>
</feature>
<feature type="helix" evidence="16">
    <location>
        <begin position="197"/>
        <end position="199"/>
    </location>
</feature>
<feature type="strand" evidence="16">
    <location>
        <begin position="202"/>
        <end position="204"/>
    </location>
</feature>
<feature type="strand" evidence="17">
    <location>
        <begin position="212"/>
        <end position="215"/>
    </location>
</feature>
<feature type="strand" evidence="17">
    <location>
        <begin position="217"/>
        <end position="221"/>
    </location>
</feature>
<feature type="turn" evidence="16">
    <location>
        <begin position="222"/>
        <end position="225"/>
    </location>
</feature>
<feature type="helix" evidence="17">
    <location>
        <begin position="232"/>
        <end position="234"/>
    </location>
</feature>
<feature type="helix" evidence="17">
    <location>
        <begin position="236"/>
        <end position="241"/>
    </location>
</feature>
<feature type="strand" evidence="17">
    <location>
        <begin position="243"/>
        <end position="254"/>
    </location>
</feature>
<feature type="strand" evidence="16">
    <location>
        <begin position="257"/>
        <end position="259"/>
    </location>
</feature>
<feature type="helix" evidence="17">
    <location>
        <begin position="265"/>
        <end position="269"/>
    </location>
</feature>
<feature type="strand" evidence="17">
    <location>
        <begin position="275"/>
        <end position="285"/>
    </location>
</feature>
<feature type="strand" evidence="17">
    <location>
        <begin position="292"/>
        <end position="296"/>
    </location>
</feature>
<feature type="strand" evidence="17">
    <location>
        <begin position="302"/>
        <end position="305"/>
    </location>
</feature>
<feature type="strand" evidence="17">
    <location>
        <begin position="310"/>
        <end position="312"/>
    </location>
</feature>
<feature type="turn" evidence="17">
    <location>
        <begin position="344"/>
        <end position="346"/>
    </location>
</feature>
<feature type="strand" evidence="17">
    <location>
        <begin position="350"/>
        <end position="352"/>
    </location>
</feature>
<feature type="helix" evidence="17">
    <location>
        <begin position="354"/>
        <end position="359"/>
    </location>
</feature>
<feature type="strand" evidence="17">
    <location>
        <begin position="366"/>
        <end position="368"/>
    </location>
</feature>
<feature type="turn" evidence="17">
    <location>
        <begin position="372"/>
        <end position="374"/>
    </location>
</feature>
<feature type="strand" evidence="17">
    <location>
        <begin position="375"/>
        <end position="380"/>
    </location>
</feature>
<feature type="strand" evidence="17">
    <location>
        <begin position="387"/>
        <end position="389"/>
    </location>
</feature>
<feature type="strand" evidence="17">
    <location>
        <begin position="391"/>
        <end position="393"/>
    </location>
</feature>
<feature type="helix" evidence="19">
    <location>
        <begin position="398"/>
        <end position="400"/>
    </location>
</feature>
<feature type="strand" evidence="17">
    <location>
        <begin position="401"/>
        <end position="403"/>
    </location>
</feature>
<feature type="turn" evidence="17">
    <location>
        <begin position="408"/>
        <end position="410"/>
    </location>
</feature>
<feature type="turn" evidence="17">
    <location>
        <begin position="418"/>
        <end position="420"/>
    </location>
</feature>
<feature type="strand" evidence="18">
    <location>
        <begin position="425"/>
        <end position="428"/>
    </location>
</feature>
<feature type="turn" evidence="17">
    <location>
        <begin position="431"/>
        <end position="434"/>
    </location>
</feature>
<feature type="strand" evidence="17">
    <location>
        <begin position="447"/>
        <end position="449"/>
    </location>
</feature>
<feature type="strand" evidence="16">
    <location>
        <begin position="451"/>
        <end position="453"/>
    </location>
</feature>
<name>NET1_HUMAN</name>
<gene>
    <name type="primary">NTN1</name>
    <name type="synonym">NTN1L</name>
</gene>
<accession>O95631</accession>
<accession>E9KL51</accession>